<accession>A7NBV5</accession>
<keyword id="KW-0963">Cytoplasm</keyword>
<keyword id="KW-0227">DNA damage</keyword>
<keyword id="KW-0233">DNA recombination</keyword>
<keyword id="KW-0234">DNA repair</keyword>
<keyword id="KW-0238">DNA-binding</keyword>
<dbReference type="EMBL" id="CP000803">
    <property type="protein sequence ID" value="ABU61458.1"/>
    <property type="molecule type" value="Genomic_DNA"/>
</dbReference>
<dbReference type="RefSeq" id="WP_003015706.1">
    <property type="nucleotide sequence ID" value="NC_009749.1"/>
</dbReference>
<dbReference type="SMR" id="A7NBV5"/>
<dbReference type="KEGG" id="fta:FTA_0982"/>
<dbReference type="HOGENOM" id="CLU_087936_0_0_6"/>
<dbReference type="GO" id="GO:0005737">
    <property type="term" value="C:cytoplasm"/>
    <property type="evidence" value="ECO:0007669"/>
    <property type="project" value="UniProtKB-SubCell"/>
</dbReference>
<dbReference type="GO" id="GO:0009379">
    <property type="term" value="C:Holliday junction helicase complex"/>
    <property type="evidence" value="ECO:0007669"/>
    <property type="project" value="InterPro"/>
</dbReference>
<dbReference type="GO" id="GO:0048476">
    <property type="term" value="C:Holliday junction resolvase complex"/>
    <property type="evidence" value="ECO:0007669"/>
    <property type="project" value="UniProtKB-UniRule"/>
</dbReference>
<dbReference type="GO" id="GO:0005524">
    <property type="term" value="F:ATP binding"/>
    <property type="evidence" value="ECO:0007669"/>
    <property type="project" value="InterPro"/>
</dbReference>
<dbReference type="GO" id="GO:0000400">
    <property type="term" value="F:four-way junction DNA binding"/>
    <property type="evidence" value="ECO:0007669"/>
    <property type="project" value="UniProtKB-UniRule"/>
</dbReference>
<dbReference type="GO" id="GO:0009378">
    <property type="term" value="F:four-way junction helicase activity"/>
    <property type="evidence" value="ECO:0007669"/>
    <property type="project" value="InterPro"/>
</dbReference>
<dbReference type="GO" id="GO:0006310">
    <property type="term" value="P:DNA recombination"/>
    <property type="evidence" value="ECO:0007669"/>
    <property type="project" value="UniProtKB-UniRule"/>
</dbReference>
<dbReference type="GO" id="GO:0006281">
    <property type="term" value="P:DNA repair"/>
    <property type="evidence" value="ECO:0007669"/>
    <property type="project" value="UniProtKB-UniRule"/>
</dbReference>
<dbReference type="CDD" id="cd14332">
    <property type="entry name" value="UBA_RuvA_C"/>
    <property type="match status" value="1"/>
</dbReference>
<dbReference type="Gene3D" id="1.10.150.20">
    <property type="entry name" value="5' to 3' exonuclease, C-terminal subdomain"/>
    <property type="match status" value="1"/>
</dbReference>
<dbReference type="Gene3D" id="1.10.8.10">
    <property type="entry name" value="DNA helicase RuvA subunit, C-terminal domain"/>
    <property type="match status" value="1"/>
</dbReference>
<dbReference type="Gene3D" id="2.40.50.140">
    <property type="entry name" value="Nucleic acid-binding proteins"/>
    <property type="match status" value="1"/>
</dbReference>
<dbReference type="HAMAP" id="MF_00031">
    <property type="entry name" value="DNA_HJ_migration_RuvA"/>
    <property type="match status" value="1"/>
</dbReference>
<dbReference type="InterPro" id="IPR013849">
    <property type="entry name" value="DNA_helicase_Holl-junc_RuvA_I"/>
</dbReference>
<dbReference type="InterPro" id="IPR003583">
    <property type="entry name" value="Hlx-hairpin-Hlx_DNA-bd_motif"/>
</dbReference>
<dbReference type="InterPro" id="IPR012340">
    <property type="entry name" value="NA-bd_OB-fold"/>
</dbReference>
<dbReference type="InterPro" id="IPR000085">
    <property type="entry name" value="RuvA"/>
</dbReference>
<dbReference type="InterPro" id="IPR010994">
    <property type="entry name" value="RuvA_2-like"/>
</dbReference>
<dbReference type="InterPro" id="IPR011114">
    <property type="entry name" value="RuvA_C"/>
</dbReference>
<dbReference type="InterPro" id="IPR036267">
    <property type="entry name" value="RuvA_C_sf"/>
</dbReference>
<dbReference type="NCBIfam" id="TIGR00084">
    <property type="entry name" value="ruvA"/>
    <property type="match status" value="1"/>
</dbReference>
<dbReference type="Pfam" id="PF14520">
    <property type="entry name" value="HHH_5"/>
    <property type="match status" value="1"/>
</dbReference>
<dbReference type="Pfam" id="PF07499">
    <property type="entry name" value="RuvA_C"/>
    <property type="match status" value="1"/>
</dbReference>
<dbReference type="Pfam" id="PF01330">
    <property type="entry name" value="RuvA_N"/>
    <property type="match status" value="1"/>
</dbReference>
<dbReference type="SMART" id="SM00278">
    <property type="entry name" value="HhH1"/>
    <property type="match status" value="2"/>
</dbReference>
<dbReference type="SUPFAM" id="SSF46929">
    <property type="entry name" value="DNA helicase RuvA subunit, C-terminal domain"/>
    <property type="match status" value="1"/>
</dbReference>
<dbReference type="SUPFAM" id="SSF50249">
    <property type="entry name" value="Nucleic acid-binding proteins"/>
    <property type="match status" value="1"/>
</dbReference>
<dbReference type="SUPFAM" id="SSF47781">
    <property type="entry name" value="RuvA domain 2-like"/>
    <property type="match status" value="1"/>
</dbReference>
<proteinExistence type="inferred from homology"/>
<feature type="chain" id="PRO_1000002449" description="Holliday junction branch migration complex subunit RuvA">
    <location>
        <begin position="1"/>
        <end position="216"/>
    </location>
</feature>
<feature type="region of interest" description="Domain I" evidence="1">
    <location>
        <begin position="1"/>
        <end position="64"/>
    </location>
</feature>
<feature type="region of interest" description="Domain II" evidence="1">
    <location>
        <begin position="65"/>
        <end position="143"/>
    </location>
</feature>
<feature type="region of interest" description="Flexible linker" evidence="1">
    <location>
        <begin position="144"/>
        <end position="163"/>
    </location>
</feature>
<feature type="region of interest" description="Domain III" evidence="1">
    <location>
        <begin position="164"/>
        <end position="216"/>
    </location>
</feature>
<gene>
    <name evidence="1" type="primary">ruvA</name>
    <name type="ordered locus">FTA_0982</name>
</gene>
<evidence type="ECO:0000255" key="1">
    <source>
        <dbReference type="HAMAP-Rule" id="MF_00031"/>
    </source>
</evidence>
<protein>
    <recommendedName>
        <fullName evidence="1">Holliday junction branch migration complex subunit RuvA</fullName>
    </recommendedName>
</protein>
<organism>
    <name type="scientific">Francisella tularensis subsp. holarctica (strain FTNF002-00 / FTA)</name>
    <dbReference type="NCBI Taxonomy" id="458234"/>
    <lineage>
        <taxon>Bacteria</taxon>
        <taxon>Pseudomonadati</taxon>
        <taxon>Pseudomonadota</taxon>
        <taxon>Gammaproteobacteria</taxon>
        <taxon>Thiotrichales</taxon>
        <taxon>Francisellaceae</taxon>
        <taxon>Francisella</taxon>
    </lineage>
</organism>
<sequence>MISFIKGVLIEKDPTALLIDVNGIGYEVFVPMTTFYTLGDIDSQVSLYTHFVVREDAQQLYGFKSKVDKKVFQELIKVNGIGARTAIAILSGMDSKTLLHCIENKDYALLATVPGIGKKTAERLVVEIYDKLLKMANEIYAQTSGTTTTSQDSQAQQAPTSVVLANSIFNESVDALLALGYKQKDAEKMARSAMGDATTAAEVIRKALQGSIKSKG</sequence>
<comment type="function">
    <text evidence="1">The RuvA-RuvB-RuvC complex processes Holliday junction (HJ) DNA during genetic recombination and DNA repair, while the RuvA-RuvB complex plays an important role in the rescue of blocked DNA replication forks via replication fork reversal (RFR). RuvA specifically binds to HJ cruciform DNA, conferring on it an open structure. The RuvB hexamer acts as an ATP-dependent pump, pulling dsDNA into and through the RuvAB complex. HJ branch migration allows RuvC to scan DNA until it finds its consensus sequence, where it cleaves and resolves the cruciform DNA.</text>
</comment>
<comment type="subunit">
    <text evidence="1">Homotetramer. Forms an RuvA(8)-RuvB(12)-Holliday junction (HJ) complex. HJ DNA is sandwiched between 2 RuvA tetramers; dsDNA enters through RuvA and exits via RuvB. An RuvB hexamer assembles on each DNA strand where it exits the tetramer. Each RuvB hexamer is contacted by two RuvA subunits (via domain III) on 2 adjacent RuvB subunits; this complex drives branch migration. In the full resolvosome a probable DNA-RuvA(4)-RuvB(12)-RuvC(2) complex forms which resolves the HJ.</text>
</comment>
<comment type="subcellular location">
    <subcellularLocation>
        <location evidence="1">Cytoplasm</location>
    </subcellularLocation>
</comment>
<comment type="domain">
    <text evidence="1">Has three domains with a flexible linker between the domains II and III and assumes an 'L' shape. Domain III is highly mobile and contacts RuvB.</text>
</comment>
<comment type="similarity">
    <text evidence="1">Belongs to the RuvA family.</text>
</comment>
<reference key="1">
    <citation type="journal article" date="2009" name="PLoS ONE">
        <title>Complete genome sequence of Francisella tularensis subspecies holarctica FTNF002-00.</title>
        <authorList>
            <person name="Barabote R.D."/>
            <person name="Xie G."/>
            <person name="Brettin T.S."/>
            <person name="Hinrichs S.H."/>
            <person name="Fey P.D."/>
            <person name="Jay J.J."/>
            <person name="Engle J.L."/>
            <person name="Godbole S.D."/>
            <person name="Noronha J.M."/>
            <person name="Scheuermann R.H."/>
            <person name="Zhou L.W."/>
            <person name="Lion C."/>
            <person name="Dempsey M.P."/>
        </authorList>
    </citation>
    <scope>NUCLEOTIDE SEQUENCE [LARGE SCALE GENOMIC DNA]</scope>
    <source>
        <strain>FTNF002-00 / FTA</strain>
    </source>
</reference>
<name>RUVA_FRATF</name>